<accession>A1V034</accession>
<keyword id="KW-0067">ATP-binding</keyword>
<keyword id="KW-0173">Coenzyme A biosynthesis</keyword>
<keyword id="KW-0963">Cytoplasm</keyword>
<keyword id="KW-0418">Kinase</keyword>
<keyword id="KW-0547">Nucleotide-binding</keyword>
<keyword id="KW-0630">Potassium</keyword>
<keyword id="KW-0808">Transferase</keyword>
<proteinExistence type="inferred from homology"/>
<comment type="function">
    <text evidence="1">Catalyzes the phosphorylation of pantothenate (Pan), the first step in CoA biosynthesis.</text>
</comment>
<comment type="catalytic activity">
    <reaction evidence="1">
        <text>(R)-pantothenate + ATP = (R)-4'-phosphopantothenate + ADP + H(+)</text>
        <dbReference type="Rhea" id="RHEA:16373"/>
        <dbReference type="ChEBI" id="CHEBI:10986"/>
        <dbReference type="ChEBI" id="CHEBI:15378"/>
        <dbReference type="ChEBI" id="CHEBI:29032"/>
        <dbReference type="ChEBI" id="CHEBI:30616"/>
        <dbReference type="ChEBI" id="CHEBI:456216"/>
        <dbReference type="EC" id="2.7.1.33"/>
    </reaction>
</comment>
<comment type="cofactor">
    <cofactor evidence="1">
        <name>NH4(+)</name>
        <dbReference type="ChEBI" id="CHEBI:28938"/>
    </cofactor>
    <cofactor evidence="1">
        <name>K(+)</name>
        <dbReference type="ChEBI" id="CHEBI:29103"/>
    </cofactor>
    <text evidence="1">A monovalent cation. Ammonium or potassium.</text>
</comment>
<comment type="pathway">
    <text evidence="1">Cofactor biosynthesis; coenzyme A biosynthesis; CoA from (R)-pantothenate: step 1/5.</text>
</comment>
<comment type="subunit">
    <text evidence="1">Homodimer.</text>
</comment>
<comment type="subcellular location">
    <subcellularLocation>
        <location evidence="1">Cytoplasm</location>
    </subcellularLocation>
</comment>
<comment type="similarity">
    <text evidence="1">Belongs to the type III pantothenate kinase family.</text>
</comment>
<gene>
    <name evidence="1" type="primary">coaX</name>
    <name type="ordered locus">BMASAVP1_A0236</name>
</gene>
<sequence length="256" mass="26802">MCLLIDAGNSRIKWALADTARHFVTSGAFEHASDAPDWSTLPAPRGAWISNVAGDAAAARIDALIEARWPALPRTVVRASAAQCGVTNGYAEPARLGSDRWAGLIGAHAAFADEHLLIATFGTATTLEALRADGHFAGGLIAPGWALMMRSLGMHTAQLPTVSIDAATNLLDELAENDAHAPFAIDTPHALSAGCLQAQAGLIERAWRDLEKAWQAPVRLVLSGGAADAIVRALTVPHTRHDTLVLTGLALIAHSA</sequence>
<protein>
    <recommendedName>
        <fullName evidence="1">Type III pantothenate kinase</fullName>
        <ecNumber evidence="1">2.7.1.33</ecNumber>
    </recommendedName>
    <alternativeName>
        <fullName evidence="1">PanK-III</fullName>
    </alternativeName>
    <alternativeName>
        <fullName evidence="1">Pantothenic acid kinase</fullName>
    </alternativeName>
</protein>
<dbReference type="EC" id="2.7.1.33" evidence="1"/>
<dbReference type="EMBL" id="CP000526">
    <property type="protein sequence ID" value="ABM51415.1"/>
    <property type="molecule type" value="Genomic_DNA"/>
</dbReference>
<dbReference type="SMR" id="A1V034"/>
<dbReference type="KEGG" id="bmv:BMASAVP1_A0236"/>
<dbReference type="HOGENOM" id="CLU_066627_0_0_4"/>
<dbReference type="UniPathway" id="UPA00241">
    <property type="reaction ID" value="UER00352"/>
</dbReference>
<dbReference type="GO" id="GO:0005737">
    <property type="term" value="C:cytoplasm"/>
    <property type="evidence" value="ECO:0007669"/>
    <property type="project" value="UniProtKB-SubCell"/>
</dbReference>
<dbReference type="GO" id="GO:0005524">
    <property type="term" value="F:ATP binding"/>
    <property type="evidence" value="ECO:0007669"/>
    <property type="project" value="UniProtKB-UniRule"/>
</dbReference>
<dbReference type="GO" id="GO:0004594">
    <property type="term" value="F:pantothenate kinase activity"/>
    <property type="evidence" value="ECO:0007669"/>
    <property type="project" value="UniProtKB-UniRule"/>
</dbReference>
<dbReference type="GO" id="GO:0015937">
    <property type="term" value="P:coenzyme A biosynthetic process"/>
    <property type="evidence" value="ECO:0007669"/>
    <property type="project" value="UniProtKB-UniRule"/>
</dbReference>
<dbReference type="CDD" id="cd24015">
    <property type="entry name" value="ASKHA_NBD_PanK-III"/>
    <property type="match status" value="1"/>
</dbReference>
<dbReference type="Gene3D" id="3.30.420.40">
    <property type="match status" value="2"/>
</dbReference>
<dbReference type="HAMAP" id="MF_01274">
    <property type="entry name" value="Pantothen_kinase_3"/>
    <property type="match status" value="1"/>
</dbReference>
<dbReference type="InterPro" id="IPR043129">
    <property type="entry name" value="ATPase_NBD"/>
</dbReference>
<dbReference type="InterPro" id="IPR004619">
    <property type="entry name" value="Type_III_PanK"/>
</dbReference>
<dbReference type="NCBIfam" id="TIGR00671">
    <property type="entry name" value="baf"/>
    <property type="match status" value="1"/>
</dbReference>
<dbReference type="NCBIfam" id="NF009865">
    <property type="entry name" value="PRK13328.1-1"/>
    <property type="match status" value="1"/>
</dbReference>
<dbReference type="NCBIfam" id="NF009868">
    <property type="entry name" value="PRK13328.1-4"/>
    <property type="match status" value="1"/>
</dbReference>
<dbReference type="PANTHER" id="PTHR34265">
    <property type="entry name" value="TYPE III PANTOTHENATE KINASE"/>
    <property type="match status" value="1"/>
</dbReference>
<dbReference type="PANTHER" id="PTHR34265:SF1">
    <property type="entry name" value="TYPE III PANTOTHENATE KINASE"/>
    <property type="match status" value="1"/>
</dbReference>
<dbReference type="Pfam" id="PF03309">
    <property type="entry name" value="Pan_kinase"/>
    <property type="match status" value="1"/>
</dbReference>
<dbReference type="SUPFAM" id="SSF53067">
    <property type="entry name" value="Actin-like ATPase domain"/>
    <property type="match status" value="2"/>
</dbReference>
<organism>
    <name type="scientific">Burkholderia mallei (strain SAVP1)</name>
    <dbReference type="NCBI Taxonomy" id="320388"/>
    <lineage>
        <taxon>Bacteria</taxon>
        <taxon>Pseudomonadati</taxon>
        <taxon>Pseudomonadota</taxon>
        <taxon>Betaproteobacteria</taxon>
        <taxon>Burkholderiales</taxon>
        <taxon>Burkholderiaceae</taxon>
        <taxon>Burkholderia</taxon>
        <taxon>pseudomallei group</taxon>
    </lineage>
</organism>
<feature type="chain" id="PRO_1000054364" description="Type III pantothenate kinase">
    <location>
        <begin position="1"/>
        <end position="256"/>
    </location>
</feature>
<feature type="active site" description="Proton acceptor" evidence="1">
    <location>
        <position position="99"/>
    </location>
</feature>
<feature type="binding site" evidence="1">
    <location>
        <begin position="6"/>
        <end position="13"/>
    </location>
    <ligand>
        <name>ATP</name>
        <dbReference type="ChEBI" id="CHEBI:30616"/>
    </ligand>
</feature>
<feature type="binding site" evidence="1">
    <location>
        <position position="90"/>
    </location>
    <ligand>
        <name>substrate</name>
    </ligand>
</feature>
<feature type="binding site" evidence="1">
    <location>
        <begin position="97"/>
        <end position="100"/>
    </location>
    <ligand>
        <name>substrate</name>
    </ligand>
</feature>
<feature type="binding site" evidence="1">
    <location>
        <position position="123"/>
    </location>
    <ligand>
        <name>ATP</name>
        <dbReference type="ChEBI" id="CHEBI:30616"/>
    </ligand>
</feature>
<feature type="binding site" evidence="1">
    <location>
        <position position="187"/>
    </location>
    <ligand>
        <name>substrate</name>
    </ligand>
</feature>
<name>COAX_BURMS</name>
<evidence type="ECO:0000255" key="1">
    <source>
        <dbReference type="HAMAP-Rule" id="MF_01274"/>
    </source>
</evidence>
<reference key="1">
    <citation type="journal article" date="2010" name="Genome Biol. Evol.">
        <title>Continuing evolution of Burkholderia mallei through genome reduction and large-scale rearrangements.</title>
        <authorList>
            <person name="Losada L."/>
            <person name="Ronning C.M."/>
            <person name="DeShazer D."/>
            <person name="Woods D."/>
            <person name="Fedorova N."/>
            <person name="Kim H.S."/>
            <person name="Shabalina S.A."/>
            <person name="Pearson T.R."/>
            <person name="Brinkac L."/>
            <person name="Tan P."/>
            <person name="Nandi T."/>
            <person name="Crabtree J."/>
            <person name="Badger J."/>
            <person name="Beckstrom-Sternberg S."/>
            <person name="Saqib M."/>
            <person name="Schutzer S.E."/>
            <person name="Keim P."/>
            <person name="Nierman W.C."/>
        </authorList>
    </citation>
    <scope>NUCLEOTIDE SEQUENCE [LARGE SCALE GENOMIC DNA]</scope>
    <source>
        <strain>SAVP1</strain>
    </source>
</reference>